<reference key="1">
    <citation type="journal article" date="2004" name="Biochem. Biophys. Res. Commun.">
        <title>The ascaphins: a family of antimicrobial peptides from the skin secretions of the most primitive extant frog, Ascaphus truei.</title>
        <authorList>
            <person name="Conlon J.M."/>
            <person name="Sonnevend A."/>
            <person name="Davidson C."/>
            <person name="Smith D.D."/>
            <person name="Nielsen P.F."/>
        </authorList>
    </citation>
    <scope>PROTEIN SEQUENCE</scope>
    <scope>FUNCTION</scope>
    <scope>MASS SPECTROMETRY</scope>
    <scope>AMIDATION AT ASN-23</scope>
    <scope>SYNTHESIS</scope>
    <source>
        <tissue>Skin secretion</tissue>
    </source>
</reference>
<accession>P0CJ25</accession>
<sequence length="23" mass="2371">GFRDVLKGAAKAFVKTVAGHIAN</sequence>
<dbReference type="GO" id="GO:0005576">
    <property type="term" value="C:extracellular region"/>
    <property type="evidence" value="ECO:0000314"/>
    <property type="project" value="UniProtKB"/>
</dbReference>
<dbReference type="GO" id="GO:0050829">
    <property type="term" value="P:defense response to Gram-negative bacterium"/>
    <property type="evidence" value="ECO:0000314"/>
    <property type="project" value="UniProtKB"/>
</dbReference>
<evidence type="ECO:0000269" key="1">
    <source>
    </source>
</evidence>
<evidence type="ECO:0000305" key="2"/>
<feature type="peptide" id="PRO_0000406128" description="Ascaphin-1">
    <location>
        <begin position="1"/>
        <end position="23"/>
    </location>
</feature>
<feature type="modified residue" description="Asparagine amide" evidence="1">
    <location>
        <position position="23"/>
    </location>
</feature>
<comment type="function">
    <text evidence="1">Antimicrobial peptide that shows higher potency against Gram-negative bacteria than against Gram-positive bacteria. Has a very week hemolytic activity.</text>
</comment>
<comment type="subcellular location">
    <subcellularLocation>
        <location>Secreted</location>
    </subcellularLocation>
</comment>
<comment type="tissue specificity">
    <text>Expressed by the skin glands.</text>
</comment>
<comment type="mass spectrometry" mass="2368.3" method="MALDI" evidence="1"/>
<comment type="similarity">
    <text evidence="2">Belongs to the ascaphin family.</text>
</comment>
<protein>
    <recommendedName>
        <fullName>Ascaphin-1</fullName>
    </recommendedName>
</protein>
<proteinExistence type="evidence at protein level"/>
<organism>
    <name type="scientific">Ascaphus truei</name>
    <name type="common">Coastal tailed frog</name>
    <dbReference type="NCBI Taxonomy" id="8439"/>
    <lineage>
        <taxon>Eukaryota</taxon>
        <taxon>Metazoa</taxon>
        <taxon>Chordata</taxon>
        <taxon>Craniata</taxon>
        <taxon>Vertebrata</taxon>
        <taxon>Euteleostomi</taxon>
        <taxon>Amphibia</taxon>
        <taxon>Batrachia</taxon>
        <taxon>Anura</taxon>
        <taxon>Ascaphidae</taxon>
        <taxon>Ascaphus</taxon>
    </lineage>
</organism>
<keyword id="KW-0027">Amidation</keyword>
<keyword id="KW-0878">Amphibian defense peptide</keyword>
<keyword id="KW-0044">Antibiotic</keyword>
<keyword id="KW-0929">Antimicrobial</keyword>
<keyword id="KW-0903">Direct protein sequencing</keyword>
<keyword id="KW-0964">Secreted</keyword>
<name>ASCA1_ASCTR</name>